<reference key="1">
    <citation type="submission" date="2008-02" db="EMBL/GenBank/DDBJ databases">
        <title>Complete sequence of Escherichia coli C str. ATCC 8739.</title>
        <authorList>
            <person name="Copeland A."/>
            <person name="Lucas S."/>
            <person name="Lapidus A."/>
            <person name="Glavina del Rio T."/>
            <person name="Dalin E."/>
            <person name="Tice H."/>
            <person name="Bruce D."/>
            <person name="Goodwin L."/>
            <person name="Pitluck S."/>
            <person name="Kiss H."/>
            <person name="Brettin T."/>
            <person name="Detter J.C."/>
            <person name="Han C."/>
            <person name="Kuske C.R."/>
            <person name="Schmutz J."/>
            <person name="Larimer F."/>
            <person name="Land M."/>
            <person name="Hauser L."/>
            <person name="Kyrpides N."/>
            <person name="Mikhailova N."/>
            <person name="Ingram L."/>
            <person name="Richardson P."/>
        </authorList>
    </citation>
    <scope>NUCLEOTIDE SEQUENCE [LARGE SCALE GENOMIC DNA]</scope>
    <source>
        <strain>ATCC 8739 / DSM 1576 / NBRC 3972 / NCIMB 8545 / WDCM 00012 / Crooks</strain>
    </source>
</reference>
<sequence length="494" mass="54871">MGSTSSLYAAIDLGSNSFHMLVVREVAGSIQTLTRIKRKVRLAAGLNSENALSNEAMERGWQCLRLFAERLQDIPPSQIRVVATATLRLAVNAGDFIAKAQEILGCPVQVISGEEEARLIYQGVAHTTGGADQRLVVDIGGASTELVTGTGAQTTSLFSLSMGCVTWLERYFADRNLGQENFDAAEKAAREVLRPVADELRYHGWKVCVGASGTVQALQEIMMAQGMDERITLEKLQQLKQRAIHCGRLEELEIDGLTLERALVFPSGLAILIAIFTELNIQCMTLAGGALREGLVYGMLHLAVEQDIRSRTLRNIQRRFMIDIDQAQRVAKVAANFFDQVENEWHLEAISRDLLISACQLHEIGLSVDFKQAPQHAAYLVRNLDLPGFTPAQKKLLATLLLNQTNPVDLSSLHQQNAVPPRVAEQLCRLLRLAIIFASRRRDDLVPEMTLQANHELLTLTLPQGWLTQHPLGKEIIAQESQWQSYVHWPLEVH</sequence>
<evidence type="ECO:0000255" key="1">
    <source>
        <dbReference type="HAMAP-Rule" id="MF_01550"/>
    </source>
</evidence>
<gene>
    <name evidence="1" type="primary">gppA</name>
    <name type="ordered locus">EcolC_4224</name>
</gene>
<dbReference type="EC" id="3.6.1.40" evidence="1"/>
<dbReference type="EMBL" id="CP000946">
    <property type="protein sequence ID" value="ACA79821.1"/>
    <property type="molecule type" value="Genomic_DNA"/>
</dbReference>
<dbReference type="RefSeq" id="WP_001295254.1">
    <property type="nucleotide sequence ID" value="NZ_MTFT01000015.1"/>
</dbReference>
<dbReference type="SMR" id="B1IWC1"/>
<dbReference type="GeneID" id="75174011"/>
<dbReference type="KEGG" id="ecl:EcolC_4224"/>
<dbReference type="HOGENOM" id="CLU_025908_4_0_6"/>
<dbReference type="UniPathway" id="UPA00908">
    <property type="reaction ID" value="UER00885"/>
</dbReference>
<dbReference type="GO" id="GO:0008894">
    <property type="term" value="F:guanosine-5'-triphosphate,3'-diphosphate diphosphatase activity"/>
    <property type="evidence" value="ECO:0007669"/>
    <property type="project" value="UniProtKB-UniRule"/>
</dbReference>
<dbReference type="GO" id="GO:0015974">
    <property type="term" value="P:guanosine pentaphosphate catabolic process"/>
    <property type="evidence" value="ECO:0007669"/>
    <property type="project" value="InterPro"/>
</dbReference>
<dbReference type="GO" id="GO:0015970">
    <property type="term" value="P:guanosine tetraphosphate biosynthetic process"/>
    <property type="evidence" value="ECO:0007669"/>
    <property type="project" value="UniProtKB-UniRule"/>
</dbReference>
<dbReference type="GO" id="GO:0015949">
    <property type="term" value="P:nucleobase-containing small molecule interconversion"/>
    <property type="evidence" value="ECO:0007669"/>
    <property type="project" value="TreeGrafter"/>
</dbReference>
<dbReference type="CDD" id="cd24117">
    <property type="entry name" value="ASKHA_NBD_EcGppA-like"/>
    <property type="match status" value="1"/>
</dbReference>
<dbReference type="FunFam" id="1.10.3210.10:FF:000004">
    <property type="entry name" value="Guanosine-5'-triphosphate,3'-diphosphate pyrophosphatase"/>
    <property type="match status" value="1"/>
</dbReference>
<dbReference type="FunFam" id="3.30.420.150:FF:000001">
    <property type="entry name" value="Guanosine-5'-triphosphate,3'-diphosphate pyrophosphatase"/>
    <property type="match status" value="1"/>
</dbReference>
<dbReference type="FunFam" id="3.30.420.40:FF:000023">
    <property type="entry name" value="Guanosine-5'-triphosphate,3'-diphosphate pyrophosphatase"/>
    <property type="match status" value="1"/>
</dbReference>
<dbReference type="Gene3D" id="3.30.420.40">
    <property type="match status" value="1"/>
</dbReference>
<dbReference type="Gene3D" id="3.30.420.150">
    <property type="entry name" value="Exopolyphosphatase. Domain 2"/>
    <property type="match status" value="1"/>
</dbReference>
<dbReference type="Gene3D" id="1.10.3210.10">
    <property type="entry name" value="Hypothetical protein af1432"/>
    <property type="match status" value="1"/>
</dbReference>
<dbReference type="HAMAP" id="MF_01550">
    <property type="entry name" value="GppA"/>
    <property type="match status" value="1"/>
</dbReference>
<dbReference type="InterPro" id="IPR043129">
    <property type="entry name" value="ATPase_NBD"/>
</dbReference>
<dbReference type="InterPro" id="IPR050273">
    <property type="entry name" value="GppA/Ppx_hydrolase"/>
</dbReference>
<dbReference type="InterPro" id="IPR023709">
    <property type="entry name" value="Guo-5TP_3DP_PyrP"/>
</dbReference>
<dbReference type="InterPro" id="IPR048950">
    <property type="entry name" value="Ppx_GppA_C"/>
</dbReference>
<dbReference type="InterPro" id="IPR003695">
    <property type="entry name" value="Ppx_GppA_N"/>
</dbReference>
<dbReference type="InterPro" id="IPR030673">
    <property type="entry name" value="PyroPPase_GppA_Ppx"/>
</dbReference>
<dbReference type="NCBIfam" id="NF008260">
    <property type="entry name" value="PRK11031.1"/>
    <property type="match status" value="1"/>
</dbReference>
<dbReference type="PANTHER" id="PTHR30005">
    <property type="entry name" value="EXOPOLYPHOSPHATASE"/>
    <property type="match status" value="1"/>
</dbReference>
<dbReference type="PANTHER" id="PTHR30005:SF0">
    <property type="entry name" value="RETROGRADE REGULATION PROTEIN 2"/>
    <property type="match status" value="1"/>
</dbReference>
<dbReference type="Pfam" id="PF02541">
    <property type="entry name" value="Ppx-GppA"/>
    <property type="match status" value="1"/>
</dbReference>
<dbReference type="Pfam" id="PF21447">
    <property type="entry name" value="Ppx-GppA_III"/>
    <property type="match status" value="1"/>
</dbReference>
<dbReference type="PIRSF" id="PIRSF001267">
    <property type="entry name" value="Pyrophosphatase_GppA_Ppx"/>
    <property type="match status" value="1"/>
</dbReference>
<dbReference type="SUPFAM" id="SSF53067">
    <property type="entry name" value="Actin-like ATPase domain"/>
    <property type="match status" value="2"/>
</dbReference>
<dbReference type="SUPFAM" id="SSF109604">
    <property type="entry name" value="HD-domain/PDEase-like"/>
    <property type="match status" value="1"/>
</dbReference>
<comment type="function">
    <text evidence="1">Catalyzes the conversion of pppGpp to ppGpp. Guanosine pentaphosphate (pppGpp) is a cytoplasmic signaling molecule which together with ppGpp controls the 'stringent response', an adaptive process that allows bacteria to respond to amino acid starvation, resulting in the coordinated regulation of numerous cellular activities.</text>
</comment>
<comment type="catalytic activity">
    <reaction evidence="1">
        <text>guanosine 3'-diphosphate 5'-triphosphate + H2O = guanosine 3',5'-bis(diphosphate) + phosphate + H(+)</text>
        <dbReference type="Rhea" id="RHEA:13073"/>
        <dbReference type="ChEBI" id="CHEBI:15377"/>
        <dbReference type="ChEBI" id="CHEBI:15378"/>
        <dbReference type="ChEBI" id="CHEBI:43474"/>
        <dbReference type="ChEBI" id="CHEBI:77828"/>
        <dbReference type="ChEBI" id="CHEBI:142410"/>
        <dbReference type="EC" id="3.6.1.40"/>
    </reaction>
</comment>
<comment type="pathway">
    <text evidence="1">Purine metabolism; ppGpp biosynthesis; ppGpp from GTP: step 2/2.</text>
</comment>
<comment type="similarity">
    <text evidence="1">Belongs to the GppA/Ppx family. GppA subfamily.</text>
</comment>
<accession>B1IWC1</accession>
<name>GPPA_ECOLC</name>
<protein>
    <recommendedName>
        <fullName evidence="1">Guanosine-5'-triphosphate,3'-diphosphate pyrophosphatase</fullName>
        <ecNumber evidence="1">3.6.1.40</ecNumber>
    </recommendedName>
    <alternativeName>
        <fullName evidence="1">Guanosine pentaphosphate phosphohydrolase</fullName>
    </alternativeName>
    <alternativeName>
        <fullName evidence="1">pppGpp-5'-phosphohydrolase</fullName>
    </alternativeName>
</protein>
<feature type="chain" id="PRO_1000087730" description="Guanosine-5'-triphosphate,3'-diphosphate pyrophosphatase">
    <location>
        <begin position="1"/>
        <end position="494"/>
    </location>
</feature>
<organism>
    <name type="scientific">Escherichia coli (strain ATCC 8739 / DSM 1576 / NBRC 3972 / NCIMB 8545 / WDCM 00012 / Crooks)</name>
    <dbReference type="NCBI Taxonomy" id="481805"/>
    <lineage>
        <taxon>Bacteria</taxon>
        <taxon>Pseudomonadati</taxon>
        <taxon>Pseudomonadota</taxon>
        <taxon>Gammaproteobacteria</taxon>
        <taxon>Enterobacterales</taxon>
        <taxon>Enterobacteriaceae</taxon>
        <taxon>Escherichia</taxon>
    </lineage>
</organism>
<proteinExistence type="inferred from homology"/>
<keyword id="KW-0378">Hydrolase</keyword>